<protein>
    <recommendedName>
        <fullName>Transcriptional regulator protein FixT</fullName>
    </recommendedName>
    <alternativeName>
        <fullName>Antikinase FixT</fullName>
    </alternativeName>
</protein>
<name>FIXT_RHIME</name>
<accession>O86464</accession>
<geneLocation type="plasmid">
    <name>pSymA</name>
    <name>megaplasmid 1</name>
</geneLocation>
<dbReference type="EMBL" id="Z21854">
    <property type="protein sequence ID" value="CAA79910.1"/>
    <property type="molecule type" value="Genomic_DNA"/>
</dbReference>
<dbReference type="EMBL" id="AE006469">
    <property type="protein sequence ID" value="AAK65326.1"/>
    <property type="molecule type" value="Genomic_DNA"/>
</dbReference>
<dbReference type="PIR" id="D95345">
    <property type="entry name" value="D95345"/>
</dbReference>
<dbReference type="RefSeq" id="NP_435914.1">
    <property type="nucleotide sequence ID" value="NC_003037.1"/>
</dbReference>
<dbReference type="RefSeq" id="WP_010967647.1">
    <property type="nucleotide sequence ID" value="NC_003037.1"/>
</dbReference>
<dbReference type="SMR" id="O86464"/>
<dbReference type="EnsemblBacteria" id="AAK65326">
    <property type="protein sequence ID" value="AAK65326"/>
    <property type="gene ID" value="SMa1226"/>
</dbReference>
<dbReference type="KEGG" id="sme:SMa1226"/>
<dbReference type="PATRIC" id="fig|266834.11.peg.688"/>
<dbReference type="HOGENOM" id="CLU_148627_0_0_5"/>
<dbReference type="OrthoDB" id="8030657at2"/>
<dbReference type="Proteomes" id="UP000001976">
    <property type="component" value="Plasmid pSymA"/>
</dbReference>
<reference key="1">
    <citation type="submission" date="1993-03" db="EMBL/GenBank/DDBJ databases">
        <authorList>
            <person name="Kahn D."/>
        </authorList>
    </citation>
    <scope>NUCLEOTIDE SEQUENCE [GENOMIC DNA]</scope>
    <source>
        <strain>RCR2011 / SU47</strain>
    </source>
</reference>
<reference key="2">
    <citation type="journal article" date="2001" name="Proc. Natl. Acad. Sci. U.S.A.">
        <title>Nucleotide sequence and predicted functions of the entire Sinorhizobium meliloti pSymA megaplasmid.</title>
        <authorList>
            <person name="Barnett M.J."/>
            <person name="Fisher R.F."/>
            <person name="Jones T."/>
            <person name="Komp C."/>
            <person name="Abola A.P."/>
            <person name="Barloy-Hubler F."/>
            <person name="Bowser L."/>
            <person name="Capela D."/>
            <person name="Galibert F."/>
            <person name="Gouzy J."/>
            <person name="Gurjal M."/>
            <person name="Hong A."/>
            <person name="Huizar L."/>
            <person name="Hyman R.W."/>
            <person name="Kahn D."/>
            <person name="Kahn M.L."/>
            <person name="Kalman S."/>
            <person name="Keating D.H."/>
            <person name="Palm C."/>
            <person name="Peck M.C."/>
            <person name="Surzycki R."/>
            <person name="Wells D.H."/>
            <person name="Yeh K.-C."/>
            <person name="Davis R.W."/>
            <person name="Federspiel N.A."/>
            <person name="Long S.R."/>
        </authorList>
    </citation>
    <scope>NUCLEOTIDE SEQUENCE [LARGE SCALE GENOMIC DNA]</scope>
    <source>
        <strain>1021</strain>
    </source>
</reference>
<reference key="3">
    <citation type="journal article" date="2001" name="Science">
        <title>The composite genome of the legume symbiont Sinorhizobium meliloti.</title>
        <authorList>
            <person name="Galibert F."/>
            <person name="Finan T.M."/>
            <person name="Long S.R."/>
            <person name="Puehler A."/>
            <person name="Abola P."/>
            <person name="Ampe F."/>
            <person name="Barloy-Hubler F."/>
            <person name="Barnett M.J."/>
            <person name="Becker A."/>
            <person name="Boistard P."/>
            <person name="Bothe G."/>
            <person name="Boutry M."/>
            <person name="Bowser L."/>
            <person name="Buhrmester J."/>
            <person name="Cadieu E."/>
            <person name="Capela D."/>
            <person name="Chain P."/>
            <person name="Cowie A."/>
            <person name="Davis R.W."/>
            <person name="Dreano S."/>
            <person name="Federspiel N.A."/>
            <person name="Fisher R.F."/>
            <person name="Gloux S."/>
            <person name="Godrie T."/>
            <person name="Goffeau A."/>
            <person name="Golding B."/>
            <person name="Gouzy J."/>
            <person name="Gurjal M."/>
            <person name="Hernandez-Lucas I."/>
            <person name="Hong A."/>
            <person name="Huizar L."/>
            <person name="Hyman R.W."/>
            <person name="Jones T."/>
            <person name="Kahn D."/>
            <person name="Kahn M.L."/>
            <person name="Kalman S."/>
            <person name="Keating D.H."/>
            <person name="Kiss E."/>
            <person name="Komp C."/>
            <person name="Lelaure V."/>
            <person name="Masuy D."/>
            <person name="Palm C."/>
            <person name="Peck M.C."/>
            <person name="Pohl T.M."/>
            <person name="Portetelle D."/>
            <person name="Purnelle B."/>
            <person name="Ramsperger U."/>
            <person name="Surzycki R."/>
            <person name="Thebault P."/>
            <person name="Vandenbol M."/>
            <person name="Vorhoelter F.J."/>
            <person name="Weidner S."/>
            <person name="Wells D.H."/>
            <person name="Wong K."/>
            <person name="Yeh K.-C."/>
            <person name="Batut J."/>
        </authorList>
    </citation>
    <scope>NUCLEOTIDE SEQUENCE [LARGE SCALE GENOMIC DNA]</scope>
    <source>
        <strain>1021</strain>
    </source>
</reference>
<reference key="4">
    <citation type="journal article" date="1997" name="Mol. Microbiol.">
        <title>Negative autoregulation of the Rhizobium meliloti fixK gene is indirect and requires a newly identified regulator, FixT.</title>
        <authorList>
            <person name="Foussard M."/>
            <person name="Garnerone A.-M."/>
            <person name="Ni F."/>
            <person name="Soupene E."/>
            <person name="Boistard P."/>
            <person name="Batut J."/>
        </authorList>
    </citation>
    <scope>IDENTIFICATION</scope>
    <scope>CHARACTERIZATION</scope>
</reference>
<reference key="5">
    <citation type="journal article" date="1999" name="J. Biol. Chem.">
        <title>Inhibition of the FixL sensor kinase by the FixT protein in Sinorhizobium meliloti.</title>
        <authorList>
            <person name="Garnerone A.-M."/>
            <person name="Cabanes D."/>
            <person name="Foussard M."/>
            <person name="Boistard P."/>
            <person name="Batut J."/>
        </authorList>
    </citation>
    <scope>CHARACTERIZATION</scope>
</reference>
<feature type="chain" id="PRO_0000087262" description="Transcriptional regulator protein FixT">
    <location>
        <begin position="1"/>
        <end position="115"/>
    </location>
</feature>
<proteinExistence type="evidence at protein level"/>
<keyword id="KW-0614">Plasmid</keyword>
<keyword id="KW-1185">Reference proteome</keyword>
<keyword id="KW-0678">Repressor</keyword>
<keyword id="KW-0804">Transcription</keyword>
<keyword id="KW-0805">Transcription regulation</keyword>
<comment type="function">
    <text>Prevents transcription of the intermediate key regulatory genes nifA and fixK by counteracting the activity of the FixLJ two-component system. Acts as an inhibitor of the sensor hemoprotein kinase fixL, preventing the production or the accumulation of its phosphorylated form.</text>
</comment>
<comment type="subunit">
    <text>Interacts directly with FixL.</text>
</comment>
<sequence>MLDGKTIIVVAADQGLRRSVAFALEVEGYYTESYDSVQKSEASCREALCAIVDDDILRTEPQAAAQFLSNRGGRAILLVDGLSALQPPVDYATLTKPFTGADLLGVINSLVVAAK</sequence>
<gene>
    <name type="primary">fixT</name>
    <name type="ordered locus">RA0668</name>
    <name type="ORF">SMa1226</name>
</gene>
<organism>
    <name type="scientific">Rhizobium meliloti (strain 1021)</name>
    <name type="common">Ensifer meliloti</name>
    <name type="synonym">Sinorhizobium meliloti</name>
    <dbReference type="NCBI Taxonomy" id="266834"/>
    <lineage>
        <taxon>Bacteria</taxon>
        <taxon>Pseudomonadati</taxon>
        <taxon>Pseudomonadota</taxon>
        <taxon>Alphaproteobacteria</taxon>
        <taxon>Hyphomicrobiales</taxon>
        <taxon>Rhizobiaceae</taxon>
        <taxon>Sinorhizobium/Ensifer group</taxon>
        <taxon>Sinorhizobium</taxon>
    </lineage>
</organism>